<keyword id="KW-0010">Activator</keyword>
<keyword id="KW-0963">Cytoplasm</keyword>
<keyword id="KW-0238">DNA-binding</keyword>
<keyword id="KW-0276">Fatty acid metabolism</keyword>
<keyword id="KW-0443">Lipid metabolism</keyword>
<keyword id="KW-1185">Reference proteome</keyword>
<keyword id="KW-0678">Repressor</keyword>
<keyword id="KW-0804">Transcription</keyword>
<keyword id="KW-0805">Transcription regulation</keyword>
<organism>
    <name type="scientific">Erwinia tasmaniensis (strain DSM 17950 / CFBP 7177 / CIP 109463 / NCPPB 4357 / Et1/99)</name>
    <dbReference type="NCBI Taxonomy" id="465817"/>
    <lineage>
        <taxon>Bacteria</taxon>
        <taxon>Pseudomonadati</taxon>
        <taxon>Pseudomonadota</taxon>
        <taxon>Gammaproteobacteria</taxon>
        <taxon>Enterobacterales</taxon>
        <taxon>Erwiniaceae</taxon>
        <taxon>Erwinia</taxon>
    </lineage>
</organism>
<protein>
    <recommendedName>
        <fullName evidence="1">Fatty acid metabolism regulator protein</fullName>
    </recommendedName>
</protein>
<evidence type="ECO:0000255" key="1">
    <source>
        <dbReference type="HAMAP-Rule" id="MF_00696"/>
    </source>
</evidence>
<feature type="chain" id="PRO_1000132320" description="Fatty acid metabolism regulator protein">
    <location>
        <begin position="1"/>
        <end position="238"/>
    </location>
</feature>
<feature type="domain" description="HTH gntR-type" evidence="1">
    <location>
        <begin position="6"/>
        <end position="74"/>
    </location>
</feature>
<feature type="DNA-binding region" description="H-T-H motif" evidence="1">
    <location>
        <begin position="34"/>
        <end position="53"/>
    </location>
</feature>
<sequence length="238" mass="27161">MVIKAQSPAGFAEEYIIESIWNSRFPPGSILPAERELSELIGVTRTTLREVLQRLARDGWLTIQHGKPTKVNNFWETSGLSILETLARLDHDSVPQLIDNLLSVRTNISSIFIRRAIRTYPDKAREVLETANEVEDQAEAYTRLDYSIFRGLAFASGNPIYGLILNGLKGLYTRVGRHYFSNPEARRLAQGFYQQLLNILHTKQYELIVDSVRDYGRRSGEIWHGMQVSMPTELLPAR</sequence>
<accession>B2VJ49</accession>
<comment type="function">
    <text evidence="1">Multifunctional regulator of fatty acid metabolism.</text>
</comment>
<comment type="subunit">
    <text evidence="1">Homodimer.</text>
</comment>
<comment type="subcellular location">
    <subcellularLocation>
        <location evidence="1">Cytoplasm</location>
    </subcellularLocation>
</comment>
<dbReference type="EMBL" id="CU468135">
    <property type="protein sequence ID" value="CAO96588.1"/>
    <property type="molecule type" value="Genomic_DNA"/>
</dbReference>
<dbReference type="RefSeq" id="WP_012441281.1">
    <property type="nucleotide sequence ID" value="NC_010694.1"/>
</dbReference>
<dbReference type="SMR" id="B2VJ49"/>
<dbReference type="STRING" id="465817.ETA_15420"/>
<dbReference type="KEGG" id="eta:ETA_15420"/>
<dbReference type="eggNOG" id="COG2186">
    <property type="taxonomic scope" value="Bacteria"/>
</dbReference>
<dbReference type="HOGENOM" id="CLU_017584_9_4_6"/>
<dbReference type="OrthoDB" id="5683977at2"/>
<dbReference type="Proteomes" id="UP000001726">
    <property type="component" value="Chromosome"/>
</dbReference>
<dbReference type="GO" id="GO:0005737">
    <property type="term" value="C:cytoplasm"/>
    <property type="evidence" value="ECO:0007669"/>
    <property type="project" value="UniProtKB-SubCell"/>
</dbReference>
<dbReference type="GO" id="GO:0003677">
    <property type="term" value="F:DNA binding"/>
    <property type="evidence" value="ECO:0007669"/>
    <property type="project" value="UniProtKB-KW"/>
</dbReference>
<dbReference type="GO" id="GO:0003700">
    <property type="term" value="F:DNA-binding transcription factor activity"/>
    <property type="evidence" value="ECO:0007669"/>
    <property type="project" value="UniProtKB-UniRule"/>
</dbReference>
<dbReference type="GO" id="GO:0000062">
    <property type="term" value="F:fatty-acyl-CoA binding"/>
    <property type="evidence" value="ECO:0007669"/>
    <property type="project" value="InterPro"/>
</dbReference>
<dbReference type="GO" id="GO:0006631">
    <property type="term" value="P:fatty acid metabolic process"/>
    <property type="evidence" value="ECO:0007669"/>
    <property type="project" value="UniProtKB-KW"/>
</dbReference>
<dbReference type="GO" id="GO:0019217">
    <property type="term" value="P:regulation of fatty acid metabolic process"/>
    <property type="evidence" value="ECO:0007669"/>
    <property type="project" value="UniProtKB-UniRule"/>
</dbReference>
<dbReference type="CDD" id="cd07377">
    <property type="entry name" value="WHTH_GntR"/>
    <property type="match status" value="1"/>
</dbReference>
<dbReference type="FunFam" id="1.10.10.10:FF:000036">
    <property type="entry name" value="Fatty acid metabolism regulator protein"/>
    <property type="match status" value="1"/>
</dbReference>
<dbReference type="Gene3D" id="1.20.120.530">
    <property type="entry name" value="GntR ligand-binding domain-like"/>
    <property type="match status" value="1"/>
</dbReference>
<dbReference type="Gene3D" id="1.10.10.10">
    <property type="entry name" value="Winged helix-like DNA-binding domain superfamily/Winged helix DNA-binding domain"/>
    <property type="match status" value="1"/>
</dbReference>
<dbReference type="HAMAP" id="MF_00696">
    <property type="entry name" value="HTH_FadR"/>
    <property type="match status" value="1"/>
</dbReference>
<dbReference type="InterPro" id="IPR014178">
    <property type="entry name" value="FA-response_TF_FadR"/>
</dbReference>
<dbReference type="InterPro" id="IPR028374">
    <property type="entry name" value="FadR_C"/>
</dbReference>
<dbReference type="InterPro" id="IPR008920">
    <property type="entry name" value="TF_FadR/GntR_C"/>
</dbReference>
<dbReference type="InterPro" id="IPR000524">
    <property type="entry name" value="Tscrpt_reg_HTH_GntR"/>
</dbReference>
<dbReference type="InterPro" id="IPR036388">
    <property type="entry name" value="WH-like_DNA-bd_sf"/>
</dbReference>
<dbReference type="InterPro" id="IPR036390">
    <property type="entry name" value="WH_DNA-bd_sf"/>
</dbReference>
<dbReference type="NCBIfam" id="TIGR02812">
    <property type="entry name" value="fadR_gamma"/>
    <property type="match status" value="1"/>
</dbReference>
<dbReference type="NCBIfam" id="NF003444">
    <property type="entry name" value="PRK04984.1"/>
    <property type="match status" value="1"/>
</dbReference>
<dbReference type="PANTHER" id="PTHR43537:SF52">
    <property type="entry name" value="FATTY ACID METABOLISM REGULATOR PROTEIN"/>
    <property type="match status" value="1"/>
</dbReference>
<dbReference type="PANTHER" id="PTHR43537">
    <property type="entry name" value="TRANSCRIPTIONAL REGULATOR, GNTR FAMILY"/>
    <property type="match status" value="1"/>
</dbReference>
<dbReference type="Pfam" id="PF07840">
    <property type="entry name" value="FadR_C"/>
    <property type="match status" value="1"/>
</dbReference>
<dbReference type="Pfam" id="PF00392">
    <property type="entry name" value="GntR"/>
    <property type="match status" value="1"/>
</dbReference>
<dbReference type="PRINTS" id="PR00035">
    <property type="entry name" value="HTHGNTR"/>
</dbReference>
<dbReference type="SMART" id="SM00345">
    <property type="entry name" value="HTH_GNTR"/>
    <property type="match status" value="1"/>
</dbReference>
<dbReference type="SUPFAM" id="SSF48008">
    <property type="entry name" value="GntR ligand-binding domain-like"/>
    <property type="match status" value="1"/>
</dbReference>
<dbReference type="SUPFAM" id="SSF46785">
    <property type="entry name" value="Winged helix' DNA-binding domain"/>
    <property type="match status" value="1"/>
</dbReference>
<dbReference type="PROSITE" id="PS50949">
    <property type="entry name" value="HTH_GNTR"/>
    <property type="match status" value="1"/>
</dbReference>
<reference key="1">
    <citation type="journal article" date="2008" name="Environ. Microbiol.">
        <title>The genome of Erwinia tasmaniensis strain Et1/99, a non-pathogenic bacterium in the genus Erwinia.</title>
        <authorList>
            <person name="Kube M."/>
            <person name="Migdoll A.M."/>
            <person name="Mueller I."/>
            <person name="Kuhl H."/>
            <person name="Beck A."/>
            <person name="Reinhardt R."/>
            <person name="Geider K."/>
        </authorList>
    </citation>
    <scope>NUCLEOTIDE SEQUENCE [LARGE SCALE GENOMIC DNA]</scope>
    <source>
        <strain>DSM 17950 / CFBP 7177 / CIP 109463 / NCPPB 4357 / Et1/99</strain>
    </source>
</reference>
<name>FADR_ERWT9</name>
<proteinExistence type="inferred from homology"/>
<gene>
    <name evidence="1" type="primary">fadR</name>
    <name type="ordered locus">ETA_15420</name>
</gene>